<evidence type="ECO:0000255" key="1">
    <source>
        <dbReference type="HAMAP-Rule" id="MF_00378"/>
    </source>
</evidence>
<gene>
    <name evidence="1" type="primary">xseA</name>
    <name type="ordered locus">Shewmr7_1304</name>
</gene>
<reference key="1">
    <citation type="submission" date="2006-08" db="EMBL/GenBank/DDBJ databases">
        <title>Complete sequence of chromosome 1 of Shewanella sp. MR-7.</title>
        <authorList>
            <person name="Copeland A."/>
            <person name="Lucas S."/>
            <person name="Lapidus A."/>
            <person name="Barry K."/>
            <person name="Detter J.C."/>
            <person name="Glavina del Rio T."/>
            <person name="Hammon N."/>
            <person name="Israni S."/>
            <person name="Dalin E."/>
            <person name="Tice H."/>
            <person name="Pitluck S."/>
            <person name="Kiss H."/>
            <person name="Brettin T."/>
            <person name="Bruce D."/>
            <person name="Han C."/>
            <person name="Tapia R."/>
            <person name="Gilna P."/>
            <person name="Schmutz J."/>
            <person name="Larimer F."/>
            <person name="Land M."/>
            <person name="Hauser L."/>
            <person name="Kyrpides N."/>
            <person name="Mikhailova N."/>
            <person name="Nealson K."/>
            <person name="Konstantinidis K."/>
            <person name="Klappenbach J."/>
            <person name="Tiedje J."/>
            <person name="Richardson P."/>
        </authorList>
    </citation>
    <scope>NUCLEOTIDE SEQUENCE [LARGE SCALE GENOMIC DNA]</scope>
    <source>
        <strain>MR-7</strain>
    </source>
</reference>
<keyword id="KW-0963">Cytoplasm</keyword>
<keyword id="KW-0269">Exonuclease</keyword>
<keyword id="KW-0378">Hydrolase</keyword>
<keyword id="KW-0540">Nuclease</keyword>
<protein>
    <recommendedName>
        <fullName evidence="1">Exodeoxyribonuclease 7 large subunit</fullName>
        <ecNumber evidence="1">3.1.11.6</ecNumber>
    </recommendedName>
    <alternativeName>
        <fullName evidence="1">Exodeoxyribonuclease VII large subunit</fullName>
        <shortName evidence="1">Exonuclease VII large subunit</shortName>
    </alternativeName>
</protein>
<organism>
    <name type="scientific">Shewanella sp. (strain MR-7)</name>
    <dbReference type="NCBI Taxonomy" id="60481"/>
    <lineage>
        <taxon>Bacteria</taxon>
        <taxon>Pseudomonadati</taxon>
        <taxon>Pseudomonadota</taxon>
        <taxon>Gammaproteobacteria</taxon>
        <taxon>Alteromonadales</taxon>
        <taxon>Shewanellaceae</taxon>
        <taxon>Shewanella</taxon>
    </lineage>
</organism>
<proteinExistence type="inferred from homology"/>
<comment type="function">
    <text evidence="1">Bidirectionally degrades single-stranded DNA into large acid-insoluble oligonucleotides, which are then degraded further into small acid-soluble oligonucleotides.</text>
</comment>
<comment type="catalytic activity">
    <reaction evidence="1">
        <text>Exonucleolytic cleavage in either 5'- to 3'- or 3'- to 5'-direction to yield nucleoside 5'-phosphates.</text>
        <dbReference type="EC" id="3.1.11.6"/>
    </reaction>
</comment>
<comment type="subunit">
    <text evidence="1">Heterooligomer composed of large and small subunits.</text>
</comment>
<comment type="subcellular location">
    <subcellularLocation>
        <location evidence="1">Cytoplasm</location>
    </subcellularLocation>
</comment>
<comment type="similarity">
    <text evidence="1">Belongs to the XseA family.</text>
</comment>
<accession>Q0HX52</accession>
<dbReference type="EC" id="3.1.11.6" evidence="1"/>
<dbReference type="EMBL" id="CP000444">
    <property type="protein sequence ID" value="ABI42303.1"/>
    <property type="molecule type" value="Genomic_DNA"/>
</dbReference>
<dbReference type="SMR" id="Q0HX52"/>
<dbReference type="KEGG" id="shm:Shewmr7_1304"/>
<dbReference type="HOGENOM" id="CLU_023625_3_1_6"/>
<dbReference type="GO" id="GO:0005737">
    <property type="term" value="C:cytoplasm"/>
    <property type="evidence" value="ECO:0007669"/>
    <property type="project" value="UniProtKB-SubCell"/>
</dbReference>
<dbReference type="GO" id="GO:0009318">
    <property type="term" value="C:exodeoxyribonuclease VII complex"/>
    <property type="evidence" value="ECO:0007669"/>
    <property type="project" value="InterPro"/>
</dbReference>
<dbReference type="GO" id="GO:0008855">
    <property type="term" value="F:exodeoxyribonuclease VII activity"/>
    <property type="evidence" value="ECO:0007669"/>
    <property type="project" value="UniProtKB-UniRule"/>
</dbReference>
<dbReference type="GO" id="GO:0003676">
    <property type="term" value="F:nucleic acid binding"/>
    <property type="evidence" value="ECO:0007669"/>
    <property type="project" value="InterPro"/>
</dbReference>
<dbReference type="GO" id="GO:0006308">
    <property type="term" value="P:DNA catabolic process"/>
    <property type="evidence" value="ECO:0007669"/>
    <property type="project" value="UniProtKB-UniRule"/>
</dbReference>
<dbReference type="CDD" id="cd04489">
    <property type="entry name" value="ExoVII_LU_OBF"/>
    <property type="match status" value="1"/>
</dbReference>
<dbReference type="HAMAP" id="MF_00378">
    <property type="entry name" value="Exonuc_7_L"/>
    <property type="match status" value="1"/>
</dbReference>
<dbReference type="InterPro" id="IPR003753">
    <property type="entry name" value="Exonuc_VII_L"/>
</dbReference>
<dbReference type="InterPro" id="IPR020579">
    <property type="entry name" value="Exonuc_VII_lsu_C"/>
</dbReference>
<dbReference type="InterPro" id="IPR025824">
    <property type="entry name" value="OB-fold_nuc-bd_dom"/>
</dbReference>
<dbReference type="NCBIfam" id="TIGR00237">
    <property type="entry name" value="xseA"/>
    <property type="match status" value="1"/>
</dbReference>
<dbReference type="PANTHER" id="PTHR30008">
    <property type="entry name" value="EXODEOXYRIBONUCLEASE 7 LARGE SUBUNIT"/>
    <property type="match status" value="1"/>
</dbReference>
<dbReference type="PANTHER" id="PTHR30008:SF0">
    <property type="entry name" value="EXODEOXYRIBONUCLEASE 7 LARGE SUBUNIT"/>
    <property type="match status" value="1"/>
</dbReference>
<dbReference type="Pfam" id="PF02601">
    <property type="entry name" value="Exonuc_VII_L"/>
    <property type="match status" value="1"/>
</dbReference>
<dbReference type="Pfam" id="PF13742">
    <property type="entry name" value="tRNA_anti_2"/>
    <property type="match status" value="1"/>
</dbReference>
<feature type="chain" id="PRO_0000273687" description="Exodeoxyribonuclease 7 large subunit">
    <location>
        <begin position="1"/>
        <end position="448"/>
    </location>
</feature>
<sequence>MQVPKNNIYTVSRLNGEVRQILEGQLGKVWLNGEISNFSAPSSGHWYLTLKDHYSQIRCAMFKGRNQSVSFKPVNGQQVLVKGAISVYEPRGDYQLLIESMLPAGDGLLAQQFEALKMKLAAQGLFAADTKRQLPKNIQRIGVITSPTGAAIRDVLHVLARRDPSIEVIIYPTQVQGESADLNICQAINIANQRLEVDVLLLTRGGGSLEDLWCFNSEALAHTIYNSALPVVSAVGHEVDTTISDYVADVRAPTPSAGAELLSQDSDNKSQRLATVLSRLKQSANHYQLKQERRLSLLEHRLQRLDPKRTLQQFEQRFDEMQLRLEAALSNKLHGLSRRQQQLANRLEKQSPKHKLALETNRLNYLATRLQDAMQDTLNQSEQRIKYAAHQLETVSPLATLSRGYSITTDANNQIIDNAAQLSVGDKINTRLRHGQVQSTVTQITDES</sequence>
<name>EX7L_SHESR</name>